<sequence length="155" mass="17468">MMTQDYKLQVEAIKCGTVIDHIPAQIGFKLLSLFKLTATDQRITIGLNLPSKRSGRKDLIKIENTFLTEQQANQLAMYAPDATVNRIDNYEVVKKLTLSLPERIDAVLTCPNSNCISHNEPVDSSFTVKAQRGEISLKCKYCEKEFDHLTVLHAD</sequence>
<keyword id="KW-0479">Metal-binding</keyword>
<keyword id="KW-0665">Pyrimidine biosynthesis</keyword>
<keyword id="KW-0862">Zinc</keyword>
<name>PYRI_YERPP</name>
<feature type="chain" id="PRO_1000000059" description="Aspartate carbamoyltransferase regulatory chain">
    <location>
        <begin position="1"/>
        <end position="155"/>
    </location>
</feature>
<feature type="binding site" evidence="1">
    <location>
        <position position="110"/>
    </location>
    <ligand>
        <name>Zn(2+)</name>
        <dbReference type="ChEBI" id="CHEBI:29105"/>
    </ligand>
</feature>
<feature type="binding site" evidence="1">
    <location>
        <position position="115"/>
    </location>
    <ligand>
        <name>Zn(2+)</name>
        <dbReference type="ChEBI" id="CHEBI:29105"/>
    </ligand>
</feature>
<feature type="binding site" evidence="1">
    <location>
        <position position="139"/>
    </location>
    <ligand>
        <name>Zn(2+)</name>
        <dbReference type="ChEBI" id="CHEBI:29105"/>
    </ligand>
</feature>
<feature type="binding site" evidence="1">
    <location>
        <position position="142"/>
    </location>
    <ligand>
        <name>Zn(2+)</name>
        <dbReference type="ChEBI" id="CHEBI:29105"/>
    </ligand>
</feature>
<accession>A4THG5</accession>
<reference key="1">
    <citation type="submission" date="2007-02" db="EMBL/GenBank/DDBJ databases">
        <title>Complete sequence of chromosome of Yersinia pestis Pestoides F.</title>
        <authorList>
            <consortium name="US DOE Joint Genome Institute"/>
            <person name="Copeland A."/>
            <person name="Lucas S."/>
            <person name="Lapidus A."/>
            <person name="Barry K."/>
            <person name="Detter J.C."/>
            <person name="Glavina del Rio T."/>
            <person name="Hammon N."/>
            <person name="Israni S."/>
            <person name="Dalin E."/>
            <person name="Tice H."/>
            <person name="Pitluck S."/>
            <person name="Di Bartolo G."/>
            <person name="Chain P."/>
            <person name="Malfatti S."/>
            <person name="Shin M."/>
            <person name="Vergez L."/>
            <person name="Schmutz J."/>
            <person name="Larimer F."/>
            <person name="Land M."/>
            <person name="Hauser L."/>
            <person name="Worsham P."/>
            <person name="Chu M."/>
            <person name="Bearden S."/>
            <person name="Garcia E."/>
            <person name="Richardson P."/>
        </authorList>
    </citation>
    <scope>NUCLEOTIDE SEQUENCE [LARGE SCALE GENOMIC DNA]</scope>
    <source>
        <strain>Pestoides F</strain>
    </source>
</reference>
<comment type="function">
    <text evidence="1">Involved in allosteric regulation of aspartate carbamoyltransferase.</text>
</comment>
<comment type="cofactor">
    <cofactor evidence="1">
        <name>Zn(2+)</name>
        <dbReference type="ChEBI" id="CHEBI:29105"/>
    </cofactor>
    <text evidence="1">Binds 1 zinc ion per subunit.</text>
</comment>
<comment type="subunit">
    <text evidence="1">Contains catalytic and regulatory chains.</text>
</comment>
<comment type="similarity">
    <text evidence="1">Belongs to the PyrI family.</text>
</comment>
<gene>
    <name evidence="1" type="primary">pyrI</name>
    <name type="ordered locus">YPDSF_0308</name>
</gene>
<proteinExistence type="inferred from homology"/>
<dbReference type="EMBL" id="CP000668">
    <property type="protein sequence ID" value="ABP38727.1"/>
    <property type="molecule type" value="Genomic_DNA"/>
</dbReference>
<dbReference type="SMR" id="A4THG5"/>
<dbReference type="KEGG" id="ypp:YPDSF_0308"/>
<dbReference type="GO" id="GO:0009347">
    <property type="term" value="C:aspartate carbamoyltransferase complex"/>
    <property type="evidence" value="ECO:0007669"/>
    <property type="project" value="InterPro"/>
</dbReference>
<dbReference type="GO" id="GO:0046872">
    <property type="term" value="F:metal ion binding"/>
    <property type="evidence" value="ECO:0007669"/>
    <property type="project" value="UniProtKB-KW"/>
</dbReference>
<dbReference type="GO" id="GO:0006207">
    <property type="term" value="P:'de novo' pyrimidine nucleobase biosynthetic process"/>
    <property type="evidence" value="ECO:0007669"/>
    <property type="project" value="InterPro"/>
</dbReference>
<dbReference type="GO" id="GO:0006221">
    <property type="term" value="P:pyrimidine nucleotide biosynthetic process"/>
    <property type="evidence" value="ECO:0007669"/>
    <property type="project" value="UniProtKB-UniRule"/>
</dbReference>
<dbReference type="FunFam" id="3.30.70.140:FF:000001">
    <property type="entry name" value="Aspartate carbamoyltransferase regulatory chain"/>
    <property type="match status" value="1"/>
</dbReference>
<dbReference type="Gene3D" id="2.30.30.20">
    <property type="entry name" value="Aspartate carbamoyltransferase regulatory subunit, C-terminal domain"/>
    <property type="match status" value="1"/>
</dbReference>
<dbReference type="Gene3D" id="3.30.70.140">
    <property type="entry name" value="Aspartate carbamoyltransferase regulatory subunit, N-terminal domain"/>
    <property type="match status" value="1"/>
</dbReference>
<dbReference type="HAMAP" id="MF_00002">
    <property type="entry name" value="Asp_carb_tr_reg"/>
    <property type="match status" value="1"/>
</dbReference>
<dbReference type="InterPro" id="IPR020545">
    <property type="entry name" value="Asp_carbamoyltransf_reg_N"/>
</dbReference>
<dbReference type="InterPro" id="IPR002801">
    <property type="entry name" value="Asp_carbamoylTrfase_reg"/>
</dbReference>
<dbReference type="InterPro" id="IPR020542">
    <property type="entry name" value="Asp_carbamoyltrfase_reg_C"/>
</dbReference>
<dbReference type="InterPro" id="IPR036792">
    <property type="entry name" value="Asp_carbatrfase_reg_C_sf"/>
</dbReference>
<dbReference type="InterPro" id="IPR036793">
    <property type="entry name" value="Asp_carbatrfase_reg_N_sf"/>
</dbReference>
<dbReference type="NCBIfam" id="TIGR00240">
    <property type="entry name" value="ATCase_reg"/>
    <property type="match status" value="1"/>
</dbReference>
<dbReference type="PANTHER" id="PTHR35805">
    <property type="entry name" value="ASPARTATE CARBAMOYLTRANSFERASE REGULATORY CHAIN"/>
    <property type="match status" value="1"/>
</dbReference>
<dbReference type="PANTHER" id="PTHR35805:SF1">
    <property type="entry name" value="ASPARTATE CARBAMOYLTRANSFERASE REGULATORY CHAIN"/>
    <property type="match status" value="1"/>
</dbReference>
<dbReference type="Pfam" id="PF01948">
    <property type="entry name" value="PyrI"/>
    <property type="match status" value="1"/>
</dbReference>
<dbReference type="Pfam" id="PF02748">
    <property type="entry name" value="PyrI_C"/>
    <property type="match status" value="1"/>
</dbReference>
<dbReference type="SUPFAM" id="SSF57825">
    <property type="entry name" value="Aspartate carbamoyltransferase, Regulatory-chain, C-terminal domain"/>
    <property type="match status" value="1"/>
</dbReference>
<dbReference type="SUPFAM" id="SSF54893">
    <property type="entry name" value="Aspartate carbamoyltransferase, Regulatory-chain, N-terminal domain"/>
    <property type="match status" value="1"/>
</dbReference>
<protein>
    <recommendedName>
        <fullName evidence="1">Aspartate carbamoyltransferase regulatory chain</fullName>
    </recommendedName>
</protein>
<evidence type="ECO:0000255" key="1">
    <source>
        <dbReference type="HAMAP-Rule" id="MF_00002"/>
    </source>
</evidence>
<organism>
    <name type="scientific">Yersinia pestis (strain Pestoides F)</name>
    <dbReference type="NCBI Taxonomy" id="386656"/>
    <lineage>
        <taxon>Bacteria</taxon>
        <taxon>Pseudomonadati</taxon>
        <taxon>Pseudomonadota</taxon>
        <taxon>Gammaproteobacteria</taxon>
        <taxon>Enterobacterales</taxon>
        <taxon>Yersiniaceae</taxon>
        <taxon>Yersinia</taxon>
    </lineage>
</organism>